<protein>
    <recommendedName>
        <fullName>Probable cinnamyl alcohol dehydrogenase 2</fullName>
        <shortName>CAD 2</shortName>
        <ecNumber evidence="1">1.1.1.195</ecNumber>
    </recommendedName>
</protein>
<reference key="1">
    <citation type="journal article" date="1992" name="Plant Mol. Biol.">
        <title>Identification and characterisation of cDNA clones encoding cinnamyl alcohol dehydrogenase from tobacco.</title>
        <authorList>
            <person name="Knight M.E."/>
            <person name="Halpin C."/>
            <person name="Schuch W."/>
        </authorList>
    </citation>
    <scope>NUCLEOTIDE SEQUENCE [MRNA]</scope>
    <scope>PARTIAL PROTEIN SEQUENCE</scope>
    <source>
        <strain>cv. Samsun</strain>
        <tissue>Stem</tissue>
    </source>
</reference>
<organism>
    <name type="scientific">Nicotiana tabacum</name>
    <name type="common">Common tobacco</name>
    <dbReference type="NCBI Taxonomy" id="4097"/>
    <lineage>
        <taxon>Eukaryota</taxon>
        <taxon>Viridiplantae</taxon>
        <taxon>Streptophyta</taxon>
        <taxon>Embryophyta</taxon>
        <taxon>Tracheophyta</taxon>
        <taxon>Spermatophyta</taxon>
        <taxon>Magnoliopsida</taxon>
        <taxon>eudicotyledons</taxon>
        <taxon>Gunneridae</taxon>
        <taxon>Pentapetalae</taxon>
        <taxon>asterids</taxon>
        <taxon>lamiids</taxon>
        <taxon>Solanales</taxon>
        <taxon>Solanaceae</taxon>
        <taxon>Nicotianoideae</taxon>
        <taxon>Nicotianeae</taxon>
        <taxon>Nicotiana</taxon>
    </lineage>
</organism>
<dbReference type="EC" id="1.1.1.195" evidence="1"/>
<dbReference type="EMBL" id="X62344">
    <property type="protein sequence ID" value="CAA44217.1"/>
    <property type="molecule type" value="mRNA"/>
</dbReference>
<dbReference type="PIR" id="S23526">
    <property type="entry name" value="S23526"/>
</dbReference>
<dbReference type="RefSeq" id="NP_001312913.1">
    <property type="nucleotide sequence ID" value="NM_001325984.1"/>
</dbReference>
<dbReference type="SMR" id="P30360"/>
<dbReference type="STRING" id="4097.P30360"/>
<dbReference type="PaxDb" id="4097-P30360"/>
<dbReference type="GeneID" id="107816761"/>
<dbReference type="KEGG" id="nta:107816761"/>
<dbReference type="OrthoDB" id="1879366at2759"/>
<dbReference type="UniPathway" id="UPA00711"/>
<dbReference type="Proteomes" id="UP000084051">
    <property type="component" value="Unplaced"/>
</dbReference>
<dbReference type="GO" id="GO:0045551">
    <property type="term" value="F:cinnamyl-alcohol dehydrogenase activity"/>
    <property type="evidence" value="ECO:0000318"/>
    <property type="project" value="GO_Central"/>
</dbReference>
<dbReference type="GO" id="GO:0050268">
    <property type="term" value="F:coniferyl-alcohol dehydrogenase activity"/>
    <property type="evidence" value="ECO:0007669"/>
    <property type="project" value="RHEA"/>
</dbReference>
<dbReference type="GO" id="GO:0008270">
    <property type="term" value="F:zinc ion binding"/>
    <property type="evidence" value="ECO:0007669"/>
    <property type="project" value="InterPro"/>
</dbReference>
<dbReference type="GO" id="GO:0009820">
    <property type="term" value="P:alkaloid metabolic process"/>
    <property type="evidence" value="ECO:0007669"/>
    <property type="project" value="UniProtKB-ARBA"/>
</dbReference>
<dbReference type="GO" id="GO:0009809">
    <property type="term" value="P:lignin biosynthetic process"/>
    <property type="evidence" value="ECO:0000318"/>
    <property type="project" value="GO_Central"/>
</dbReference>
<dbReference type="CDD" id="cd05283">
    <property type="entry name" value="CAD1"/>
    <property type="match status" value="1"/>
</dbReference>
<dbReference type="FunFam" id="3.40.50.720:FF:000022">
    <property type="entry name" value="Cinnamyl alcohol dehydrogenase"/>
    <property type="match status" value="1"/>
</dbReference>
<dbReference type="FunFam" id="3.90.180.10:FF:000004">
    <property type="entry name" value="probable cinnamyl alcohol dehydrogenase"/>
    <property type="match status" value="1"/>
</dbReference>
<dbReference type="FunFam" id="3.90.180.10:FF:000100">
    <property type="entry name" value="Putative cinnamyl alcohol dehydrogenase 6"/>
    <property type="match status" value="1"/>
</dbReference>
<dbReference type="Gene3D" id="3.90.180.10">
    <property type="entry name" value="Medium-chain alcohol dehydrogenases, catalytic domain"/>
    <property type="match status" value="1"/>
</dbReference>
<dbReference type="Gene3D" id="3.40.50.720">
    <property type="entry name" value="NAD(P)-binding Rossmann-like Domain"/>
    <property type="match status" value="1"/>
</dbReference>
<dbReference type="InterPro" id="IPR013149">
    <property type="entry name" value="ADH-like_C"/>
</dbReference>
<dbReference type="InterPro" id="IPR013154">
    <property type="entry name" value="ADH-like_N"/>
</dbReference>
<dbReference type="InterPro" id="IPR002328">
    <property type="entry name" value="ADH_Zn_CS"/>
</dbReference>
<dbReference type="InterPro" id="IPR047109">
    <property type="entry name" value="CAD-like"/>
</dbReference>
<dbReference type="InterPro" id="IPR011032">
    <property type="entry name" value="GroES-like_sf"/>
</dbReference>
<dbReference type="InterPro" id="IPR036291">
    <property type="entry name" value="NAD(P)-bd_dom_sf"/>
</dbReference>
<dbReference type="InterPro" id="IPR020843">
    <property type="entry name" value="PKS_ER"/>
</dbReference>
<dbReference type="PANTHER" id="PTHR42683">
    <property type="entry name" value="ALDEHYDE REDUCTASE"/>
    <property type="match status" value="1"/>
</dbReference>
<dbReference type="Pfam" id="PF08240">
    <property type="entry name" value="ADH_N"/>
    <property type="match status" value="1"/>
</dbReference>
<dbReference type="Pfam" id="PF00107">
    <property type="entry name" value="ADH_zinc_N"/>
    <property type="match status" value="1"/>
</dbReference>
<dbReference type="SMART" id="SM00829">
    <property type="entry name" value="PKS_ER"/>
    <property type="match status" value="1"/>
</dbReference>
<dbReference type="SUPFAM" id="SSF50129">
    <property type="entry name" value="GroES-like"/>
    <property type="match status" value="1"/>
</dbReference>
<dbReference type="SUPFAM" id="SSF51735">
    <property type="entry name" value="NAD(P)-binding Rossmann-fold domains"/>
    <property type="match status" value="1"/>
</dbReference>
<dbReference type="PROSITE" id="PS00059">
    <property type="entry name" value="ADH_ZINC"/>
    <property type="match status" value="1"/>
</dbReference>
<feature type="chain" id="PRO_0000160806" description="Probable cinnamyl alcohol dehydrogenase 2">
    <location>
        <begin position="1"/>
        <end position="357"/>
    </location>
</feature>
<feature type="binding site" evidence="1">
    <location>
        <position position="47"/>
    </location>
    <ligand>
        <name>Zn(2+)</name>
        <dbReference type="ChEBI" id="CHEBI:29105"/>
        <label>1</label>
        <note>catalytic</note>
    </ligand>
</feature>
<feature type="binding site" evidence="1">
    <location>
        <position position="49"/>
    </location>
    <ligand>
        <name>NADP(+)</name>
        <dbReference type="ChEBI" id="CHEBI:58349"/>
    </ligand>
</feature>
<feature type="binding site" evidence="1">
    <location>
        <position position="69"/>
    </location>
    <ligand>
        <name>Zn(2+)</name>
        <dbReference type="ChEBI" id="CHEBI:29105"/>
        <label>1</label>
        <note>catalytic</note>
    </ligand>
</feature>
<feature type="binding site" evidence="1">
    <location>
        <position position="70"/>
    </location>
    <ligand>
        <name>Zn(2+)</name>
        <dbReference type="ChEBI" id="CHEBI:29105"/>
        <label>1</label>
        <note>catalytic</note>
    </ligand>
</feature>
<feature type="binding site" evidence="1">
    <location>
        <position position="100"/>
    </location>
    <ligand>
        <name>Zn(2+)</name>
        <dbReference type="ChEBI" id="CHEBI:29105"/>
        <label>2</label>
    </ligand>
</feature>
<feature type="binding site" evidence="1">
    <location>
        <position position="103"/>
    </location>
    <ligand>
        <name>Zn(2+)</name>
        <dbReference type="ChEBI" id="CHEBI:29105"/>
        <label>2</label>
    </ligand>
</feature>
<feature type="binding site" evidence="1">
    <location>
        <position position="106"/>
    </location>
    <ligand>
        <name>Zn(2+)</name>
        <dbReference type="ChEBI" id="CHEBI:29105"/>
        <label>2</label>
    </ligand>
</feature>
<feature type="binding site" evidence="1">
    <location>
        <position position="114"/>
    </location>
    <ligand>
        <name>Zn(2+)</name>
        <dbReference type="ChEBI" id="CHEBI:29105"/>
        <label>2</label>
    </ligand>
</feature>
<feature type="binding site" evidence="1">
    <location>
        <position position="163"/>
    </location>
    <ligand>
        <name>Zn(2+)</name>
        <dbReference type="ChEBI" id="CHEBI:29105"/>
        <label>1</label>
        <note>catalytic</note>
    </ligand>
</feature>
<feature type="binding site" evidence="1">
    <location>
        <position position="167"/>
    </location>
    <ligand>
        <name>NADP(+)</name>
        <dbReference type="ChEBI" id="CHEBI:58349"/>
    </ligand>
</feature>
<feature type="binding site" evidence="1">
    <location>
        <begin position="188"/>
        <end position="193"/>
    </location>
    <ligand>
        <name>NADP(+)</name>
        <dbReference type="ChEBI" id="CHEBI:58349"/>
    </ligand>
</feature>
<feature type="binding site" evidence="1">
    <location>
        <begin position="211"/>
        <end position="216"/>
    </location>
    <ligand>
        <name>NADP(+)</name>
        <dbReference type="ChEBI" id="CHEBI:58349"/>
    </ligand>
</feature>
<feature type="binding site" evidence="1">
    <location>
        <position position="251"/>
    </location>
    <ligand>
        <name>NADP(+)</name>
        <dbReference type="ChEBI" id="CHEBI:58349"/>
    </ligand>
</feature>
<feature type="binding site" evidence="1">
    <location>
        <position position="275"/>
    </location>
    <ligand>
        <name>NADP(+)</name>
        <dbReference type="ChEBI" id="CHEBI:58349"/>
    </ligand>
</feature>
<feature type="binding site" evidence="1">
    <location>
        <begin position="298"/>
        <end position="300"/>
    </location>
    <ligand>
        <name>NADP(+)</name>
        <dbReference type="ChEBI" id="CHEBI:58349"/>
    </ligand>
</feature>
<keyword id="KW-0903">Direct protein sequencing</keyword>
<keyword id="KW-0438">Lignin biosynthesis</keyword>
<keyword id="KW-0479">Metal-binding</keyword>
<keyword id="KW-0521">NADP</keyword>
<keyword id="KW-0560">Oxidoreductase</keyword>
<keyword id="KW-1185">Reference proteome</keyword>
<keyword id="KW-0862">Zinc</keyword>
<sequence>MGSLDVEKSAIGWAARDPSGLLSPYTYTLRNTGPEDVQVKVLYCGLCHSDLHQVKNDLGMSNYPLVPGHEVVGKVVEVGADVSKFKVGDTVGVGLLVGSCRNCGPCKREIEQYCNKKIWNCNDVYTDGKPTQGGFANSMVVDQNFVVKIPEGMAPEQAAPLLCAGITVYSPFNHFGFNQSGFRGGILGLGGVGHMGVKIAKAMGHHVTVISSSNKKRQEALEHLGADDYLVSSDTDKMQEAADSLDYIIDTVPVGHPLELYLSLLKIDGKLILIGVINTPLQFISPMVMLGRKSITGSFIGSMKETEEMLDFCKEKGVTSQIEIVKMDYINTAMERLEKNDVSYRFVVDVAGSKLDQ</sequence>
<evidence type="ECO:0000250" key="1">
    <source>
        <dbReference type="UniProtKB" id="O49482"/>
    </source>
</evidence>
<evidence type="ECO:0000305" key="2"/>
<accession>P30360</accession>
<proteinExistence type="evidence at protein level"/>
<name>CADH2_TOBAC</name>
<gene>
    <name type="primary">CAD19</name>
</gene>
<comment type="function">
    <text evidence="1">Involved in lignin biosynthesis. Catalyzes the final step specific for the production of lignin monomers. Catalyzes the NADPH-dependent reduction of coniferaldehyde, 5-hydroxyconiferaldehyde, sinapaldehyde, 4-coumaraldehyde and caffeyl aldehyde to their respective alcohols.</text>
</comment>
<comment type="catalytic activity">
    <reaction evidence="1">
        <text>(E)-cinnamyl alcohol + NADP(+) = (E)-cinnamaldehyde + NADPH + H(+)</text>
        <dbReference type="Rhea" id="RHEA:10392"/>
        <dbReference type="ChEBI" id="CHEBI:15378"/>
        <dbReference type="ChEBI" id="CHEBI:16731"/>
        <dbReference type="ChEBI" id="CHEBI:33227"/>
        <dbReference type="ChEBI" id="CHEBI:57783"/>
        <dbReference type="ChEBI" id="CHEBI:58349"/>
        <dbReference type="EC" id="1.1.1.195"/>
    </reaction>
    <physiologicalReaction direction="right-to-left" evidence="1">
        <dbReference type="Rhea" id="RHEA:10394"/>
    </physiologicalReaction>
</comment>
<comment type="catalytic activity">
    <reaction evidence="1">
        <text>(E)-coniferol + NADP(+) = (E)-coniferaldehyde + NADPH + H(+)</text>
        <dbReference type="Rhea" id="RHEA:22444"/>
        <dbReference type="ChEBI" id="CHEBI:15378"/>
        <dbReference type="ChEBI" id="CHEBI:16547"/>
        <dbReference type="ChEBI" id="CHEBI:17745"/>
        <dbReference type="ChEBI" id="CHEBI:57783"/>
        <dbReference type="ChEBI" id="CHEBI:58349"/>
        <dbReference type="EC" id="1.1.1.195"/>
    </reaction>
    <physiologicalReaction direction="right-to-left" evidence="1">
        <dbReference type="Rhea" id="RHEA:22446"/>
    </physiologicalReaction>
</comment>
<comment type="catalytic activity">
    <reaction evidence="1">
        <text>(E)-sinapyl alcohol + NADP(+) = (E)-sinapaldehyde + NADPH + H(+)</text>
        <dbReference type="Rhea" id="RHEA:45704"/>
        <dbReference type="ChEBI" id="CHEBI:15378"/>
        <dbReference type="ChEBI" id="CHEBI:27949"/>
        <dbReference type="ChEBI" id="CHEBI:57783"/>
        <dbReference type="ChEBI" id="CHEBI:58349"/>
        <dbReference type="ChEBI" id="CHEBI:64557"/>
        <dbReference type="EC" id="1.1.1.195"/>
    </reaction>
    <physiologicalReaction direction="right-to-left" evidence="1">
        <dbReference type="Rhea" id="RHEA:45706"/>
    </physiologicalReaction>
</comment>
<comment type="catalytic activity">
    <reaction evidence="1">
        <text>(E)-4-coumaroyl alcohol + NADP(+) = (E)-4-coumaraldehyde + NADPH + H(+)</text>
        <dbReference type="Rhea" id="RHEA:45724"/>
        <dbReference type="ChEBI" id="CHEBI:15378"/>
        <dbReference type="ChEBI" id="CHEBI:28353"/>
        <dbReference type="ChEBI" id="CHEBI:57783"/>
        <dbReference type="ChEBI" id="CHEBI:58349"/>
        <dbReference type="ChEBI" id="CHEBI:64555"/>
        <dbReference type="EC" id="1.1.1.195"/>
    </reaction>
    <physiologicalReaction direction="right-to-left" evidence="1">
        <dbReference type="Rhea" id="RHEA:45726"/>
    </physiologicalReaction>
</comment>
<comment type="catalytic activity">
    <reaction evidence="1">
        <text>(E)-caffeyl alcohol + NADP(+) = (E)-caffeyl aldehyde + NADPH + H(+)</text>
        <dbReference type="Rhea" id="RHEA:45728"/>
        <dbReference type="ChEBI" id="CHEBI:15378"/>
        <dbReference type="ChEBI" id="CHEBI:28323"/>
        <dbReference type="ChEBI" id="CHEBI:31334"/>
        <dbReference type="ChEBI" id="CHEBI:57783"/>
        <dbReference type="ChEBI" id="CHEBI:58349"/>
    </reaction>
    <physiologicalReaction direction="right-to-left" evidence="1">
        <dbReference type="Rhea" id="RHEA:45730"/>
    </physiologicalReaction>
</comment>
<comment type="cofactor">
    <cofactor evidence="1">
        <name>Zn(2+)</name>
        <dbReference type="ChEBI" id="CHEBI:29105"/>
    </cofactor>
    <text evidence="1">Binds 2 Zn(2+) ions per subunit.</text>
</comment>
<comment type="pathway">
    <text evidence="1">Aromatic compound metabolism; phenylpropanoid biosynthesis.</text>
</comment>
<comment type="subunit">
    <text evidence="1">Homodimer.</text>
</comment>
<comment type="induction">
    <text>By fungal elicitor.</text>
</comment>
<comment type="PTM">
    <text>The N-terminus is blocked.</text>
</comment>
<comment type="similarity">
    <text evidence="2">Belongs to the zinc-containing alcohol dehydrogenase family.</text>
</comment>